<organism>
    <name type="scientific">Rippkaea orientalis (strain PCC 8801 / RF-1)</name>
    <name type="common">Cyanothece sp. (strain PCC 8801)</name>
    <dbReference type="NCBI Taxonomy" id="41431"/>
    <lineage>
        <taxon>Bacteria</taxon>
        <taxon>Bacillati</taxon>
        <taxon>Cyanobacteriota</taxon>
        <taxon>Cyanophyceae</taxon>
        <taxon>Oscillatoriophycideae</taxon>
        <taxon>Chroococcales</taxon>
        <taxon>Aphanothecaceae</taxon>
        <taxon>Rippkaea</taxon>
        <taxon>Rippkaea orientalis</taxon>
    </lineage>
</organism>
<dbReference type="EMBL" id="CP001287">
    <property type="protein sequence ID" value="ACK64884.1"/>
    <property type="molecule type" value="Genomic_DNA"/>
</dbReference>
<dbReference type="RefSeq" id="WP_012594160.1">
    <property type="nucleotide sequence ID" value="NC_011726.1"/>
</dbReference>
<dbReference type="SMR" id="B7JYL4"/>
<dbReference type="STRING" id="41431.PCC8801_0802"/>
<dbReference type="KEGG" id="cyp:PCC8801_0802"/>
<dbReference type="eggNOG" id="COG0290">
    <property type="taxonomic scope" value="Bacteria"/>
</dbReference>
<dbReference type="HOGENOM" id="CLU_054919_3_2_3"/>
<dbReference type="OrthoDB" id="9806014at2"/>
<dbReference type="Proteomes" id="UP000008204">
    <property type="component" value="Chromosome"/>
</dbReference>
<dbReference type="GO" id="GO:0005829">
    <property type="term" value="C:cytosol"/>
    <property type="evidence" value="ECO:0007669"/>
    <property type="project" value="TreeGrafter"/>
</dbReference>
<dbReference type="GO" id="GO:0016020">
    <property type="term" value="C:membrane"/>
    <property type="evidence" value="ECO:0007669"/>
    <property type="project" value="TreeGrafter"/>
</dbReference>
<dbReference type="GO" id="GO:0043022">
    <property type="term" value="F:ribosome binding"/>
    <property type="evidence" value="ECO:0007669"/>
    <property type="project" value="TreeGrafter"/>
</dbReference>
<dbReference type="GO" id="GO:0003743">
    <property type="term" value="F:translation initiation factor activity"/>
    <property type="evidence" value="ECO:0007669"/>
    <property type="project" value="UniProtKB-UniRule"/>
</dbReference>
<dbReference type="GO" id="GO:0032790">
    <property type="term" value="P:ribosome disassembly"/>
    <property type="evidence" value="ECO:0007669"/>
    <property type="project" value="TreeGrafter"/>
</dbReference>
<dbReference type="FunFam" id="3.10.20.80:FF:000001">
    <property type="entry name" value="Translation initiation factor IF-3"/>
    <property type="match status" value="1"/>
</dbReference>
<dbReference type="FunFam" id="3.30.110.10:FF:000001">
    <property type="entry name" value="Translation initiation factor IF-3"/>
    <property type="match status" value="1"/>
</dbReference>
<dbReference type="Gene3D" id="3.30.110.10">
    <property type="entry name" value="Translation initiation factor 3 (IF-3), C-terminal domain"/>
    <property type="match status" value="1"/>
</dbReference>
<dbReference type="Gene3D" id="3.10.20.80">
    <property type="entry name" value="Translation initiation factor 3 (IF-3), N-terminal domain"/>
    <property type="match status" value="1"/>
</dbReference>
<dbReference type="HAMAP" id="MF_00080">
    <property type="entry name" value="IF_3"/>
    <property type="match status" value="1"/>
</dbReference>
<dbReference type="InterPro" id="IPR036788">
    <property type="entry name" value="T_IF-3_C_sf"/>
</dbReference>
<dbReference type="InterPro" id="IPR036787">
    <property type="entry name" value="T_IF-3_N_sf"/>
</dbReference>
<dbReference type="InterPro" id="IPR019813">
    <property type="entry name" value="Translation_initiation_fac3_CS"/>
</dbReference>
<dbReference type="InterPro" id="IPR001288">
    <property type="entry name" value="Translation_initiation_fac_3"/>
</dbReference>
<dbReference type="InterPro" id="IPR019815">
    <property type="entry name" value="Translation_initiation_fac_3_C"/>
</dbReference>
<dbReference type="InterPro" id="IPR019814">
    <property type="entry name" value="Translation_initiation_fac_3_N"/>
</dbReference>
<dbReference type="NCBIfam" id="TIGR00168">
    <property type="entry name" value="infC"/>
    <property type="match status" value="1"/>
</dbReference>
<dbReference type="PANTHER" id="PTHR10938">
    <property type="entry name" value="TRANSLATION INITIATION FACTOR IF-3"/>
    <property type="match status" value="1"/>
</dbReference>
<dbReference type="PANTHER" id="PTHR10938:SF0">
    <property type="entry name" value="TRANSLATION INITIATION FACTOR IF-3, MITOCHONDRIAL"/>
    <property type="match status" value="1"/>
</dbReference>
<dbReference type="Pfam" id="PF00707">
    <property type="entry name" value="IF3_C"/>
    <property type="match status" value="1"/>
</dbReference>
<dbReference type="Pfam" id="PF05198">
    <property type="entry name" value="IF3_N"/>
    <property type="match status" value="1"/>
</dbReference>
<dbReference type="SUPFAM" id="SSF55200">
    <property type="entry name" value="Translation initiation factor IF3, C-terminal domain"/>
    <property type="match status" value="1"/>
</dbReference>
<dbReference type="SUPFAM" id="SSF54364">
    <property type="entry name" value="Translation initiation factor IF3, N-terminal domain"/>
    <property type="match status" value="1"/>
</dbReference>
<dbReference type="PROSITE" id="PS00938">
    <property type="entry name" value="IF3"/>
    <property type="match status" value="1"/>
</dbReference>
<sequence>MIDKRRPQRDLPKINERIRFPEIRVIDSDGSQVGVITPKEALSLAQEKELDLVLVSETAKPPVCRIMDYGKYKFEQEKKAREAKKKQHTADVKEVKMRYKIGESDYNVRVNQAKRFLKSGDKVKATVTFRGREIQHANLAQELLERMAKDLEELAEIQQAPKREGRNMMMFLTPKK</sequence>
<keyword id="KW-0963">Cytoplasm</keyword>
<keyword id="KW-0396">Initiation factor</keyword>
<keyword id="KW-0648">Protein biosynthesis</keyword>
<keyword id="KW-1185">Reference proteome</keyword>
<evidence type="ECO:0000255" key="1">
    <source>
        <dbReference type="HAMAP-Rule" id="MF_00080"/>
    </source>
</evidence>
<reference key="1">
    <citation type="journal article" date="2011" name="MBio">
        <title>Novel metabolic attributes of the genus Cyanothece, comprising a group of unicellular nitrogen-fixing Cyanobacteria.</title>
        <authorList>
            <person name="Bandyopadhyay A."/>
            <person name="Elvitigala T."/>
            <person name="Welsh E."/>
            <person name="Stockel J."/>
            <person name="Liberton M."/>
            <person name="Min H."/>
            <person name="Sherman L.A."/>
            <person name="Pakrasi H.B."/>
        </authorList>
    </citation>
    <scope>NUCLEOTIDE SEQUENCE [LARGE SCALE GENOMIC DNA]</scope>
    <source>
        <strain>PCC 8801 / RF-1</strain>
    </source>
</reference>
<protein>
    <recommendedName>
        <fullName evidence="1">Translation initiation factor IF-3</fullName>
    </recommendedName>
</protein>
<feature type="chain" id="PRO_1000117100" description="Translation initiation factor IF-3">
    <location>
        <begin position="1"/>
        <end position="176"/>
    </location>
</feature>
<name>IF3_RIPO1</name>
<proteinExistence type="inferred from homology"/>
<comment type="function">
    <text evidence="1">IF-3 binds to the 30S ribosomal subunit and shifts the equilibrium between 70S ribosomes and their 50S and 30S subunits in favor of the free subunits, thus enhancing the availability of 30S subunits on which protein synthesis initiation begins.</text>
</comment>
<comment type="subunit">
    <text evidence="1">Monomer.</text>
</comment>
<comment type="subcellular location">
    <subcellularLocation>
        <location evidence="1">Cytoplasm</location>
    </subcellularLocation>
</comment>
<comment type="similarity">
    <text evidence="1">Belongs to the IF-3 family.</text>
</comment>
<gene>
    <name evidence="1" type="primary">infC</name>
    <name type="ordered locus">PCC8801_0802</name>
</gene>
<accession>B7JYL4</accession>